<keyword id="KW-1185">Reference proteome</keyword>
<protein>
    <recommendedName>
        <fullName>Uncharacterized protein F53A9.9</fullName>
    </recommendedName>
</protein>
<evidence type="ECO:0000256" key="1">
    <source>
        <dbReference type="SAM" id="MobiDB-lite"/>
    </source>
</evidence>
<name>YV59_CAEEL</name>
<reference key="1">
    <citation type="journal article" date="1998" name="Science">
        <title>Genome sequence of the nematode C. elegans: a platform for investigating biology.</title>
        <authorList>
            <consortium name="The C. elegans sequencing consortium"/>
        </authorList>
    </citation>
    <scope>NUCLEOTIDE SEQUENCE [LARGE SCALE GENOMIC DNA]</scope>
    <source>
        <strain>Bristol N2</strain>
    </source>
</reference>
<gene>
    <name type="ORF">F53A9.9</name>
</gene>
<dbReference type="EMBL" id="FO081048">
    <property type="protein sequence ID" value="CCD68807.1"/>
    <property type="molecule type" value="Genomic_DNA"/>
</dbReference>
<dbReference type="PIR" id="T16440">
    <property type="entry name" value="T16440"/>
</dbReference>
<dbReference type="RefSeq" id="NP_509478.1">
    <property type="nucleotide sequence ID" value="NM_077077.4"/>
</dbReference>
<dbReference type="FunCoup" id="P50439">
    <property type="interactions" value="1498"/>
</dbReference>
<dbReference type="STRING" id="6239.F53A9.9.1"/>
<dbReference type="PaxDb" id="6239-F53A9.9"/>
<dbReference type="PeptideAtlas" id="P50439"/>
<dbReference type="EnsemblMetazoa" id="F53A9.9.1">
    <property type="protein sequence ID" value="F53A9.9.1"/>
    <property type="gene ID" value="WBGene00018732"/>
</dbReference>
<dbReference type="GeneID" id="186147"/>
<dbReference type="KEGG" id="cel:CELE_F53A9.9"/>
<dbReference type="UCSC" id="F53A9.9">
    <property type="organism name" value="c. elegans"/>
</dbReference>
<dbReference type="AGR" id="WB:WBGene00018732"/>
<dbReference type="CTD" id="186147"/>
<dbReference type="WormBase" id="F53A9.9">
    <property type="protein sequence ID" value="CE02769"/>
    <property type="gene ID" value="WBGene00018732"/>
</dbReference>
<dbReference type="eggNOG" id="ENOG502THUI">
    <property type="taxonomic scope" value="Eukaryota"/>
</dbReference>
<dbReference type="HOGENOM" id="CLU_1798156_0_0_1"/>
<dbReference type="InParanoid" id="P50439"/>
<dbReference type="OMA" id="MANNYGN"/>
<dbReference type="OrthoDB" id="10626933at2759"/>
<dbReference type="PRO" id="PR:P50439"/>
<dbReference type="Proteomes" id="UP000001940">
    <property type="component" value="Chromosome X"/>
</dbReference>
<dbReference type="Bgee" id="WBGene00018732">
    <property type="expression patterns" value="Expressed in larva and 3 other cell types or tissues"/>
</dbReference>
<proteinExistence type="predicted"/>
<organism>
    <name type="scientific">Caenorhabditis elegans</name>
    <dbReference type="NCBI Taxonomy" id="6239"/>
    <lineage>
        <taxon>Eukaryota</taxon>
        <taxon>Metazoa</taxon>
        <taxon>Ecdysozoa</taxon>
        <taxon>Nematoda</taxon>
        <taxon>Chromadorea</taxon>
        <taxon>Rhabditida</taxon>
        <taxon>Rhabditina</taxon>
        <taxon>Rhabditomorpha</taxon>
        <taxon>Rhabditoidea</taxon>
        <taxon>Rhabditidae</taxon>
        <taxon>Peloderinae</taxon>
        <taxon>Caenorhabditis</taxon>
    </lineage>
</organism>
<sequence>MANNYGNAGYNGPTNGPYGNAGYNGANGPYGNNSVHQGQPHTDQNGVPILHYGNGGYNGPQAQYGNAGQNQPSGPFGGAGYTGPTAGTGFGNAGYTPSPPAGVPGNGFVPGGVDVHDDHHHDGHHKKHGRKEHDHHHGHHHGHHHKH</sequence>
<accession>P50439</accession>
<feature type="chain" id="PRO_0000065358" description="Uncharacterized protein F53A9.9">
    <location>
        <begin position="1"/>
        <end position="147"/>
    </location>
</feature>
<feature type="region of interest" description="Disordered" evidence="1">
    <location>
        <begin position="29"/>
        <end position="147"/>
    </location>
</feature>
<feature type="compositionally biased region" description="Polar residues" evidence="1">
    <location>
        <begin position="34"/>
        <end position="45"/>
    </location>
</feature>
<feature type="compositionally biased region" description="Polar residues" evidence="1">
    <location>
        <begin position="60"/>
        <end position="73"/>
    </location>
</feature>
<feature type="compositionally biased region" description="Gly residues" evidence="1">
    <location>
        <begin position="75"/>
        <end position="92"/>
    </location>
</feature>
<feature type="compositionally biased region" description="Basic residues" evidence="1">
    <location>
        <begin position="122"/>
        <end position="147"/>
    </location>
</feature>